<protein>
    <recommendedName>
        <fullName>Cytochrome b</fullName>
    </recommendedName>
    <alternativeName>
        <fullName>Complex III subunit 3</fullName>
    </alternativeName>
    <alternativeName>
        <fullName>Complex III subunit III</fullName>
    </alternativeName>
    <alternativeName>
        <fullName>Cytochrome b-c1 complex subunit 3</fullName>
    </alternativeName>
    <alternativeName>
        <fullName>Ubiquinol-cytochrome-c reductase complex cytochrome b subunit</fullName>
    </alternativeName>
</protein>
<evidence type="ECO:0000250" key="1"/>
<evidence type="ECO:0000250" key="2">
    <source>
        <dbReference type="UniProtKB" id="P00157"/>
    </source>
</evidence>
<evidence type="ECO:0000255" key="3">
    <source>
        <dbReference type="PROSITE-ProRule" id="PRU00967"/>
    </source>
</evidence>
<evidence type="ECO:0000255" key="4">
    <source>
        <dbReference type="PROSITE-ProRule" id="PRU00968"/>
    </source>
</evidence>
<organism>
    <name type="scientific">Indostomus paradoxus</name>
    <name type="common">Armoured stickleback</name>
    <dbReference type="NCBI Taxonomy" id="181450"/>
    <lineage>
        <taxon>Eukaryota</taxon>
        <taxon>Metazoa</taxon>
        <taxon>Chordata</taxon>
        <taxon>Craniata</taxon>
        <taxon>Vertebrata</taxon>
        <taxon>Euteleostomi</taxon>
        <taxon>Actinopterygii</taxon>
        <taxon>Neopterygii</taxon>
        <taxon>Teleostei</taxon>
        <taxon>Neoteleostei</taxon>
        <taxon>Acanthomorphata</taxon>
        <taxon>Anabantaria</taxon>
        <taxon>Synbranchiformes</taxon>
        <taxon>Indostomidae</taxon>
        <taxon>Indostomus</taxon>
    </lineage>
</organism>
<gene>
    <name type="primary">mt-cyb</name>
    <name type="synonym">cob</name>
    <name type="synonym">cytb</name>
    <name type="synonym">mtcyb</name>
</gene>
<comment type="function">
    <text evidence="2">Component of the ubiquinol-cytochrome c reductase complex (complex III or cytochrome b-c1 complex) that is part of the mitochondrial respiratory chain. The b-c1 complex mediates electron transfer from ubiquinol to cytochrome c. Contributes to the generation of a proton gradient across the mitochondrial membrane that is then used for ATP synthesis.</text>
</comment>
<comment type="cofactor">
    <cofactor evidence="2">
        <name>heme b</name>
        <dbReference type="ChEBI" id="CHEBI:60344"/>
    </cofactor>
    <text evidence="2">Binds 2 heme b groups non-covalently.</text>
</comment>
<comment type="subunit">
    <text evidence="2">The cytochrome bc1 complex contains 3 respiratory subunits (MT-CYB, CYC1 and UQCRFS1), 2 core proteins (UQCRC1 and UQCRC2) and probably 6 low-molecular weight proteins.</text>
</comment>
<comment type="subcellular location">
    <subcellularLocation>
        <location evidence="2">Mitochondrion inner membrane</location>
        <topology evidence="2">Multi-pass membrane protein</topology>
    </subcellularLocation>
</comment>
<comment type="miscellaneous">
    <text evidence="1">Heme 1 (or BL or b562) is low-potential and absorbs at about 562 nm, and heme 2 (or BH or b566) is high-potential and absorbs at about 566 nm.</text>
</comment>
<comment type="similarity">
    <text evidence="3 4">Belongs to the cytochrome b family.</text>
</comment>
<comment type="caution">
    <text evidence="2">The full-length protein contains only eight transmembrane helices, not nine as predicted by bioinformatics tools.</text>
</comment>
<name>CYB_INDPA</name>
<dbReference type="EMBL" id="AP004438">
    <property type="protein sequence ID" value="BAC23605.1"/>
    <property type="molecule type" value="Genomic_DNA"/>
</dbReference>
<dbReference type="RefSeq" id="NP_740009.1">
    <property type="nucleotide sequence ID" value="NC_004401.1"/>
</dbReference>
<dbReference type="SMR" id="Q8HL93"/>
<dbReference type="GeneID" id="805950"/>
<dbReference type="CTD" id="4519"/>
<dbReference type="GO" id="GO:0005743">
    <property type="term" value="C:mitochondrial inner membrane"/>
    <property type="evidence" value="ECO:0007669"/>
    <property type="project" value="UniProtKB-SubCell"/>
</dbReference>
<dbReference type="GO" id="GO:0045275">
    <property type="term" value="C:respiratory chain complex III"/>
    <property type="evidence" value="ECO:0007669"/>
    <property type="project" value="InterPro"/>
</dbReference>
<dbReference type="GO" id="GO:0046872">
    <property type="term" value="F:metal ion binding"/>
    <property type="evidence" value="ECO:0007669"/>
    <property type="project" value="UniProtKB-KW"/>
</dbReference>
<dbReference type="GO" id="GO:0008121">
    <property type="term" value="F:ubiquinol-cytochrome-c reductase activity"/>
    <property type="evidence" value="ECO:0007669"/>
    <property type="project" value="InterPro"/>
</dbReference>
<dbReference type="GO" id="GO:0006122">
    <property type="term" value="P:mitochondrial electron transport, ubiquinol to cytochrome c"/>
    <property type="evidence" value="ECO:0007669"/>
    <property type="project" value="TreeGrafter"/>
</dbReference>
<dbReference type="CDD" id="cd00290">
    <property type="entry name" value="cytochrome_b_C"/>
    <property type="match status" value="1"/>
</dbReference>
<dbReference type="CDD" id="cd00284">
    <property type="entry name" value="Cytochrome_b_N"/>
    <property type="match status" value="1"/>
</dbReference>
<dbReference type="FunFam" id="1.20.810.10:FF:000002">
    <property type="entry name" value="Cytochrome b"/>
    <property type="match status" value="1"/>
</dbReference>
<dbReference type="Gene3D" id="1.20.810.10">
    <property type="entry name" value="Cytochrome Bc1 Complex, Chain C"/>
    <property type="match status" value="1"/>
</dbReference>
<dbReference type="InterPro" id="IPR005798">
    <property type="entry name" value="Cyt_b/b6_C"/>
</dbReference>
<dbReference type="InterPro" id="IPR036150">
    <property type="entry name" value="Cyt_b/b6_C_sf"/>
</dbReference>
<dbReference type="InterPro" id="IPR005797">
    <property type="entry name" value="Cyt_b/b6_N"/>
</dbReference>
<dbReference type="InterPro" id="IPR027387">
    <property type="entry name" value="Cytb/b6-like_sf"/>
</dbReference>
<dbReference type="InterPro" id="IPR030689">
    <property type="entry name" value="Cytochrome_b"/>
</dbReference>
<dbReference type="InterPro" id="IPR048260">
    <property type="entry name" value="Cytochrome_b_C_euk/bac"/>
</dbReference>
<dbReference type="InterPro" id="IPR048259">
    <property type="entry name" value="Cytochrome_b_N_euk/bac"/>
</dbReference>
<dbReference type="InterPro" id="IPR016174">
    <property type="entry name" value="Di-haem_cyt_TM"/>
</dbReference>
<dbReference type="PANTHER" id="PTHR19271">
    <property type="entry name" value="CYTOCHROME B"/>
    <property type="match status" value="1"/>
</dbReference>
<dbReference type="PANTHER" id="PTHR19271:SF16">
    <property type="entry name" value="CYTOCHROME B"/>
    <property type="match status" value="1"/>
</dbReference>
<dbReference type="Pfam" id="PF00032">
    <property type="entry name" value="Cytochrom_B_C"/>
    <property type="match status" value="1"/>
</dbReference>
<dbReference type="Pfam" id="PF00033">
    <property type="entry name" value="Cytochrome_B"/>
    <property type="match status" value="1"/>
</dbReference>
<dbReference type="PIRSF" id="PIRSF038885">
    <property type="entry name" value="COB"/>
    <property type="match status" value="1"/>
</dbReference>
<dbReference type="SUPFAM" id="SSF81648">
    <property type="entry name" value="a domain/subunit of cytochrome bc1 complex (Ubiquinol-cytochrome c reductase)"/>
    <property type="match status" value="1"/>
</dbReference>
<dbReference type="SUPFAM" id="SSF81342">
    <property type="entry name" value="Transmembrane di-heme cytochromes"/>
    <property type="match status" value="1"/>
</dbReference>
<dbReference type="PROSITE" id="PS51003">
    <property type="entry name" value="CYTB_CTER"/>
    <property type="match status" value="1"/>
</dbReference>
<dbReference type="PROSITE" id="PS51002">
    <property type="entry name" value="CYTB_NTER"/>
    <property type="match status" value="1"/>
</dbReference>
<keyword id="KW-0249">Electron transport</keyword>
<keyword id="KW-0349">Heme</keyword>
<keyword id="KW-0408">Iron</keyword>
<keyword id="KW-0472">Membrane</keyword>
<keyword id="KW-0479">Metal-binding</keyword>
<keyword id="KW-0496">Mitochondrion</keyword>
<keyword id="KW-0999">Mitochondrion inner membrane</keyword>
<keyword id="KW-0679">Respiratory chain</keyword>
<keyword id="KW-0812">Transmembrane</keyword>
<keyword id="KW-1133">Transmembrane helix</keyword>
<keyword id="KW-0813">Transport</keyword>
<keyword id="KW-0830">Ubiquinone</keyword>
<accession>Q8HL93</accession>
<sequence>MASLRKTHPLLKIVNDNSIDLPTPQNISAWWNFGSLLGLCLVAQILTGLFLAMHYTPDINAAFSSVAHICRDVNHGWLIRNLHANGASFFFLCLYLHIGRGLYYGSYLNKGTWNTGILLLLLIMVTAFVGYVLPWGQMSFWGATVITSLLSALPYVGTDLVQWLWGGFSVDNATLTRFFAFHFFIPFIATAVVALHFLFLHETGSNNPTGLSSSADKVPLHPYFLYKDLLGFLLLLAPLTALAVFSPNLFGDPDNFLRANPMVTPTHIKPEWYFLFAYAILRAIPNKLGGVLALLASILVLAVVPFLHTSKQRSLALRPWSQLCLFTLVVTVLILTWIGGMPLEQPLTTVGQIASLLYFTIILFLMPMLGLIENKMLN</sequence>
<feature type="chain" id="PRO_0000061064" description="Cytochrome b">
    <location>
        <begin position="1"/>
        <end position="378"/>
    </location>
</feature>
<feature type="transmembrane region" description="Helical" evidence="2">
    <location>
        <begin position="33"/>
        <end position="53"/>
    </location>
</feature>
<feature type="transmembrane region" description="Helical" evidence="2">
    <location>
        <begin position="77"/>
        <end position="98"/>
    </location>
</feature>
<feature type="transmembrane region" description="Helical" evidence="2">
    <location>
        <begin position="113"/>
        <end position="133"/>
    </location>
</feature>
<feature type="transmembrane region" description="Helical" evidence="2">
    <location>
        <begin position="178"/>
        <end position="198"/>
    </location>
</feature>
<feature type="transmembrane region" description="Helical" evidence="2">
    <location>
        <begin position="226"/>
        <end position="246"/>
    </location>
</feature>
<feature type="transmembrane region" description="Helical" evidence="2">
    <location>
        <begin position="288"/>
        <end position="308"/>
    </location>
</feature>
<feature type="transmembrane region" description="Helical" evidence="2">
    <location>
        <begin position="320"/>
        <end position="340"/>
    </location>
</feature>
<feature type="transmembrane region" description="Helical" evidence="2">
    <location>
        <begin position="347"/>
        <end position="367"/>
    </location>
</feature>
<feature type="binding site" description="axial binding residue" evidence="2">
    <location>
        <position position="83"/>
    </location>
    <ligand>
        <name>heme b</name>
        <dbReference type="ChEBI" id="CHEBI:60344"/>
        <label>b562</label>
    </ligand>
    <ligandPart>
        <name>Fe</name>
        <dbReference type="ChEBI" id="CHEBI:18248"/>
    </ligandPart>
</feature>
<feature type="binding site" description="axial binding residue" evidence="2">
    <location>
        <position position="97"/>
    </location>
    <ligand>
        <name>heme b</name>
        <dbReference type="ChEBI" id="CHEBI:60344"/>
        <label>b566</label>
    </ligand>
    <ligandPart>
        <name>Fe</name>
        <dbReference type="ChEBI" id="CHEBI:18248"/>
    </ligandPart>
</feature>
<feature type="binding site" description="axial binding residue" evidence="2">
    <location>
        <position position="182"/>
    </location>
    <ligand>
        <name>heme b</name>
        <dbReference type="ChEBI" id="CHEBI:60344"/>
        <label>b562</label>
    </ligand>
    <ligandPart>
        <name>Fe</name>
        <dbReference type="ChEBI" id="CHEBI:18248"/>
    </ligandPart>
</feature>
<feature type="binding site" description="axial binding residue" evidence="2">
    <location>
        <position position="196"/>
    </location>
    <ligand>
        <name>heme b</name>
        <dbReference type="ChEBI" id="CHEBI:60344"/>
        <label>b566</label>
    </ligand>
    <ligandPart>
        <name>Fe</name>
        <dbReference type="ChEBI" id="CHEBI:18248"/>
    </ligandPart>
</feature>
<feature type="binding site" evidence="2">
    <location>
        <position position="201"/>
    </location>
    <ligand>
        <name>a ubiquinone</name>
        <dbReference type="ChEBI" id="CHEBI:16389"/>
    </ligand>
</feature>
<geneLocation type="mitochondrion"/>
<reference key="1">
    <citation type="journal article" date="2003" name="Mol. Phylogenet. Evol.">
        <title>Major patterns of higher teleostean phylogenies: a new perspective based on 100 complete mitochondrial DNA sequences.</title>
        <authorList>
            <person name="Miya M."/>
            <person name="Takeshima H."/>
            <person name="Endo H."/>
            <person name="Ishiguro N.B."/>
            <person name="Inoue J.G."/>
            <person name="Mukai T."/>
            <person name="Satoh T.P."/>
            <person name="Yamaguchi M."/>
            <person name="Kawaguchi A."/>
            <person name="Mabuchi K."/>
            <person name="Shirai S.M."/>
            <person name="Nishida M."/>
        </authorList>
    </citation>
    <scope>NUCLEOTIDE SEQUENCE [GENOMIC DNA]</scope>
</reference>
<proteinExistence type="inferred from homology"/>